<gene>
    <name evidence="6" type="primary">EAT1</name>
    <name evidence="8" type="synonym">BHLH141</name>
    <name evidence="7" type="synonym">DTD</name>
    <name evidence="9" type="ordered locus">Os04g0599300</name>
    <name evidence="8" type="ordered locus">LOC_Os04g51070</name>
    <name evidence="12" type="ORF">OsJ_16023</name>
    <name evidence="10" type="ORF">OSJNBa0083N12.3</name>
    <name evidence="11" type="ORF">OSJNba0093F12.24</name>
</gene>
<evidence type="ECO:0000255" key="1">
    <source>
        <dbReference type="PROSITE-ProRule" id="PRU00981"/>
    </source>
</evidence>
<evidence type="ECO:0000256" key="2">
    <source>
        <dbReference type="SAM" id="MobiDB-lite"/>
    </source>
</evidence>
<evidence type="ECO:0000269" key="3">
    <source>
    </source>
</evidence>
<evidence type="ECO:0000269" key="4">
    <source>
    </source>
</evidence>
<evidence type="ECO:0000303" key="5">
    <source>
    </source>
</evidence>
<evidence type="ECO:0000303" key="6">
    <source>
    </source>
</evidence>
<evidence type="ECO:0000303" key="7">
    <source>
    </source>
</evidence>
<evidence type="ECO:0000305" key="8"/>
<evidence type="ECO:0000312" key="9">
    <source>
        <dbReference type="EMBL" id="BAF15663.1"/>
    </source>
</evidence>
<evidence type="ECO:0000312" key="10">
    <source>
        <dbReference type="EMBL" id="CAE03466.2"/>
    </source>
</evidence>
<evidence type="ECO:0000312" key="11">
    <source>
        <dbReference type="EMBL" id="CAE03950.1"/>
    </source>
</evidence>
<evidence type="ECO:0000312" key="12">
    <source>
        <dbReference type="EMBL" id="EEE61606.1"/>
    </source>
</evidence>
<sequence>MIVGAGYFEDSHDQSLMAGSLIHDSNQAPASSENTSIDLQKFKVHPYSTEALSNTANLAEAARAINHLQHQLEIDLEQEVPPVETANWDPAICTIPDHIINHQFSEDPQNILVEQQIQQYDSALYPNGVYTPAPDLLNLMQCTMAPAFPATTSVFGDTTLNGTNYLDLNGELTGVAAVPDSGSGLMFASDSALQLGYHGTQSHLIKDICHSLPQNYGLFPSEDERDVIIGVGSGDLFQEIDDRQFDSVLECRRGKGEFGKGKGKANFATERERREQLNVKFRTLRMLFPNPTKNDRASIVGDAIEYIDELNRTVKELKILVEQKRHGNNRRKVLKLDQEAAADGESSSMRPVRDDQDNQLHGAIRSSWVQRRSKECHVDVRIVDDEVNIKLTEKKKANSLLHAAKVLDEFQLELIHVVGGIIGDHHIFMFNTKVSEGSAVYACAVAKKLLQAVDVQHQALDIFN</sequence>
<organism>
    <name type="scientific">Oryza sativa subsp. japonica</name>
    <name type="common">Rice</name>
    <dbReference type="NCBI Taxonomy" id="39947"/>
    <lineage>
        <taxon>Eukaryota</taxon>
        <taxon>Viridiplantae</taxon>
        <taxon>Streptophyta</taxon>
        <taxon>Embryophyta</taxon>
        <taxon>Tracheophyta</taxon>
        <taxon>Spermatophyta</taxon>
        <taxon>Magnoliopsida</taxon>
        <taxon>Liliopsida</taxon>
        <taxon>Poales</taxon>
        <taxon>Poaceae</taxon>
        <taxon>BOP clade</taxon>
        <taxon>Oryzoideae</taxon>
        <taxon>Oryzeae</taxon>
        <taxon>Oryzinae</taxon>
        <taxon>Oryza</taxon>
        <taxon>Oryza sativa</taxon>
    </lineage>
</organism>
<dbReference type="EMBL" id="AL606683">
    <property type="protein sequence ID" value="CAE03466.2"/>
    <property type="molecule type" value="Genomic_DNA"/>
</dbReference>
<dbReference type="EMBL" id="AL607004">
    <property type="protein sequence ID" value="CAE03950.1"/>
    <property type="status" value="ALT_SEQ"/>
    <property type="molecule type" value="Genomic_DNA"/>
</dbReference>
<dbReference type="EMBL" id="AP008210">
    <property type="protein sequence ID" value="BAF15663.1"/>
    <property type="molecule type" value="Genomic_DNA"/>
</dbReference>
<dbReference type="EMBL" id="AP014960">
    <property type="protein sequence ID" value="BAS90820.1"/>
    <property type="molecule type" value="Genomic_DNA"/>
</dbReference>
<dbReference type="EMBL" id="CM000141">
    <property type="protein sequence ID" value="EEE61606.1"/>
    <property type="molecule type" value="Genomic_DNA"/>
</dbReference>
<dbReference type="RefSeq" id="XP_015634639.1">
    <property type="nucleotide sequence ID" value="XM_015779153.1"/>
</dbReference>
<dbReference type="RefSeq" id="XP_015634640.1">
    <property type="nucleotide sequence ID" value="XM_015779154.1"/>
</dbReference>
<dbReference type="RefSeq" id="XP_015634641.1">
    <property type="nucleotide sequence ID" value="XM_015779155.1"/>
</dbReference>
<dbReference type="SMR" id="Q7X8R0"/>
<dbReference type="FunCoup" id="Q7X8R0">
    <property type="interactions" value="650"/>
</dbReference>
<dbReference type="STRING" id="39947.Q7X8R0"/>
<dbReference type="PaxDb" id="39947-Q7X8R0"/>
<dbReference type="EnsemblPlants" id="Os04t0599300-01">
    <property type="protein sequence ID" value="Os04t0599300-01"/>
    <property type="gene ID" value="Os04g0599300"/>
</dbReference>
<dbReference type="GeneID" id="4336865"/>
<dbReference type="Gramene" id="Os04t0599300-01">
    <property type="protein sequence ID" value="Os04t0599300-01"/>
    <property type="gene ID" value="Os04g0599300"/>
</dbReference>
<dbReference type="KEGG" id="dosa:Os04g0599300"/>
<dbReference type="KEGG" id="osa:4336865"/>
<dbReference type="eggNOG" id="ENOG502QQIQ">
    <property type="taxonomic scope" value="Eukaryota"/>
</dbReference>
<dbReference type="HOGENOM" id="CLU_045325_0_0_1"/>
<dbReference type="InParanoid" id="Q7X8R0"/>
<dbReference type="OMA" id="MDDRQFE"/>
<dbReference type="OrthoDB" id="1932168at2759"/>
<dbReference type="Proteomes" id="UP000000763">
    <property type="component" value="Chromosome 4"/>
</dbReference>
<dbReference type="Proteomes" id="UP000007752">
    <property type="component" value="Chromosome 4"/>
</dbReference>
<dbReference type="Proteomes" id="UP000059680">
    <property type="component" value="Chromosome 4"/>
</dbReference>
<dbReference type="GO" id="GO:0005634">
    <property type="term" value="C:nucleus"/>
    <property type="evidence" value="ECO:0000314"/>
    <property type="project" value="UniProtKB"/>
</dbReference>
<dbReference type="GO" id="GO:0046983">
    <property type="term" value="F:protein dimerization activity"/>
    <property type="evidence" value="ECO:0007669"/>
    <property type="project" value="InterPro"/>
</dbReference>
<dbReference type="GO" id="GO:0048658">
    <property type="term" value="P:anther wall tapetum development"/>
    <property type="evidence" value="ECO:0000315"/>
    <property type="project" value="UniProtKB"/>
</dbReference>
<dbReference type="GO" id="GO:0009555">
    <property type="term" value="P:pollen development"/>
    <property type="evidence" value="ECO:0000315"/>
    <property type="project" value="UniProtKB"/>
</dbReference>
<dbReference type="GO" id="GO:0043068">
    <property type="term" value="P:positive regulation of programmed cell death"/>
    <property type="evidence" value="ECO:0000315"/>
    <property type="project" value="UniProtKB"/>
</dbReference>
<dbReference type="GO" id="GO:0006355">
    <property type="term" value="P:regulation of DNA-templated transcription"/>
    <property type="evidence" value="ECO:0000314"/>
    <property type="project" value="UniProtKB"/>
</dbReference>
<dbReference type="CDD" id="cd18918">
    <property type="entry name" value="bHLH_AtMYC1_like"/>
    <property type="match status" value="1"/>
</dbReference>
<dbReference type="FunFam" id="4.10.280.10:FF:000109">
    <property type="entry name" value="Transcription factor bHLH91-like"/>
    <property type="match status" value="1"/>
</dbReference>
<dbReference type="Gene3D" id="4.10.280.10">
    <property type="entry name" value="Helix-loop-helix DNA-binding domain"/>
    <property type="match status" value="1"/>
</dbReference>
<dbReference type="InterPro" id="IPR045895">
    <property type="entry name" value="bHLH91-like"/>
</dbReference>
<dbReference type="InterPro" id="IPR011598">
    <property type="entry name" value="bHLH_dom"/>
</dbReference>
<dbReference type="InterPro" id="IPR036638">
    <property type="entry name" value="HLH_DNA-bd_sf"/>
</dbReference>
<dbReference type="InterPro" id="IPR045896">
    <property type="entry name" value="MYC1-like_bHLH"/>
</dbReference>
<dbReference type="PANTHER" id="PTHR46834">
    <property type="entry name" value="TRANSCRIPTION FACTOR BHLH91"/>
    <property type="match status" value="1"/>
</dbReference>
<dbReference type="PANTHER" id="PTHR46834:SF4">
    <property type="entry name" value="TRANSCRIPTION FACTOR EAT1"/>
    <property type="match status" value="1"/>
</dbReference>
<dbReference type="Pfam" id="PF00010">
    <property type="entry name" value="HLH"/>
    <property type="match status" value="1"/>
</dbReference>
<dbReference type="SMART" id="SM00353">
    <property type="entry name" value="HLH"/>
    <property type="match status" value="1"/>
</dbReference>
<dbReference type="SUPFAM" id="SSF47459">
    <property type="entry name" value="HLH, helix-loop-helix DNA-binding domain"/>
    <property type="match status" value="1"/>
</dbReference>
<dbReference type="PROSITE" id="PS50888">
    <property type="entry name" value="BHLH"/>
    <property type="match status" value="1"/>
</dbReference>
<keyword id="KW-0217">Developmental protein</keyword>
<keyword id="KW-0539">Nucleus</keyword>
<keyword id="KW-1185">Reference proteome</keyword>
<keyword id="KW-0804">Transcription</keyword>
<keyword id="KW-0805">Transcription regulation</keyword>
<reference key="1">
    <citation type="journal article" date="2002" name="Nature">
        <title>Sequence and analysis of rice chromosome 4.</title>
        <authorList>
            <person name="Feng Q."/>
            <person name="Zhang Y."/>
            <person name="Hao P."/>
            <person name="Wang S."/>
            <person name="Fu G."/>
            <person name="Huang Y."/>
            <person name="Li Y."/>
            <person name="Zhu J."/>
            <person name="Liu Y."/>
            <person name="Hu X."/>
            <person name="Jia P."/>
            <person name="Zhang Y."/>
            <person name="Zhao Q."/>
            <person name="Ying K."/>
            <person name="Yu S."/>
            <person name="Tang Y."/>
            <person name="Weng Q."/>
            <person name="Zhang L."/>
            <person name="Lu Y."/>
            <person name="Mu J."/>
            <person name="Lu Y."/>
            <person name="Zhang L.S."/>
            <person name="Yu Z."/>
            <person name="Fan D."/>
            <person name="Liu X."/>
            <person name="Lu T."/>
            <person name="Li C."/>
            <person name="Wu Y."/>
            <person name="Sun T."/>
            <person name="Lei H."/>
            <person name="Li T."/>
            <person name="Hu H."/>
            <person name="Guan J."/>
            <person name="Wu M."/>
            <person name="Zhang R."/>
            <person name="Zhou B."/>
            <person name="Chen Z."/>
            <person name="Chen L."/>
            <person name="Jin Z."/>
            <person name="Wang R."/>
            <person name="Yin H."/>
            <person name="Cai Z."/>
            <person name="Ren S."/>
            <person name="Lv G."/>
            <person name="Gu W."/>
            <person name="Zhu G."/>
            <person name="Tu Y."/>
            <person name="Jia J."/>
            <person name="Zhang Y."/>
            <person name="Chen J."/>
            <person name="Kang H."/>
            <person name="Chen X."/>
            <person name="Shao C."/>
            <person name="Sun Y."/>
            <person name="Hu Q."/>
            <person name="Zhang X."/>
            <person name="Zhang W."/>
            <person name="Wang L."/>
            <person name="Ding C."/>
            <person name="Sheng H."/>
            <person name="Gu J."/>
            <person name="Chen S."/>
            <person name="Ni L."/>
            <person name="Zhu F."/>
            <person name="Chen W."/>
            <person name="Lan L."/>
            <person name="Lai Y."/>
            <person name="Cheng Z."/>
            <person name="Gu M."/>
            <person name="Jiang J."/>
            <person name="Li J."/>
            <person name="Hong G."/>
            <person name="Xue Y."/>
            <person name="Han B."/>
        </authorList>
    </citation>
    <scope>NUCLEOTIDE SEQUENCE [LARGE SCALE GENOMIC DNA]</scope>
    <source>
        <strain>cv. Nipponbare</strain>
    </source>
</reference>
<reference key="2">
    <citation type="journal article" date="2005" name="Nature">
        <title>The map-based sequence of the rice genome.</title>
        <authorList>
            <consortium name="International rice genome sequencing project (IRGSP)"/>
        </authorList>
    </citation>
    <scope>NUCLEOTIDE SEQUENCE [LARGE SCALE GENOMIC DNA]</scope>
    <source>
        <strain>cv. Nipponbare</strain>
    </source>
</reference>
<reference key="3">
    <citation type="journal article" date="2008" name="Nucleic Acids Res.">
        <title>The rice annotation project database (RAP-DB): 2008 update.</title>
        <authorList>
            <consortium name="The rice annotation project (RAP)"/>
        </authorList>
    </citation>
    <scope>GENOME REANNOTATION</scope>
    <source>
        <strain>cv. Nipponbare</strain>
    </source>
</reference>
<reference key="4">
    <citation type="journal article" date="2013" name="Rice">
        <title>Improvement of the Oryza sativa Nipponbare reference genome using next generation sequence and optical map data.</title>
        <authorList>
            <person name="Kawahara Y."/>
            <person name="de la Bastide M."/>
            <person name="Hamilton J.P."/>
            <person name="Kanamori H."/>
            <person name="McCombie W.R."/>
            <person name="Ouyang S."/>
            <person name="Schwartz D.C."/>
            <person name="Tanaka T."/>
            <person name="Wu J."/>
            <person name="Zhou S."/>
            <person name="Childs K.L."/>
            <person name="Davidson R.M."/>
            <person name="Lin H."/>
            <person name="Quesada-Ocampo L."/>
            <person name="Vaillancourt B."/>
            <person name="Sakai H."/>
            <person name="Lee S.S."/>
            <person name="Kim J."/>
            <person name="Numa H."/>
            <person name="Itoh T."/>
            <person name="Buell C.R."/>
            <person name="Matsumoto T."/>
        </authorList>
    </citation>
    <scope>GENOME REANNOTATION</scope>
    <source>
        <strain>cv. Nipponbare</strain>
    </source>
</reference>
<reference key="5">
    <citation type="journal article" date="2005" name="PLoS Biol.">
        <title>The genomes of Oryza sativa: a history of duplications.</title>
        <authorList>
            <person name="Yu J."/>
            <person name="Wang J."/>
            <person name="Lin W."/>
            <person name="Li S."/>
            <person name="Li H."/>
            <person name="Zhou J."/>
            <person name="Ni P."/>
            <person name="Dong W."/>
            <person name="Hu S."/>
            <person name="Zeng C."/>
            <person name="Zhang J."/>
            <person name="Zhang Y."/>
            <person name="Li R."/>
            <person name="Xu Z."/>
            <person name="Li S."/>
            <person name="Li X."/>
            <person name="Zheng H."/>
            <person name="Cong L."/>
            <person name="Lin L."/>
            <person name="Yin J."/>
            <person name="Geng J."/>
            <person name="Li G."/>
            <person name="Shi J."/>
            <person name="Liu J."/>
            <person name="Lv H."/>
            <person name="Li J."/>
            <person name="Wang J."/>
            <person name="Deng Y."/>
            <person name="Ran L."/>
            <person name="Shi X."/>
            <person name="Wang X."/>
            <person name="Wu Q."/>
            <person name="Li C."/>
            <person name="Ren X."/>
            <person name="Wang J."/>
            <person name="Wang X."/>
            <person name="Li D."/>
            <person name="Liu D."/>
            <person name="Zhang X."/>
            <person name="Ji Z."/>
            <person name="Zhao W."/>
            <person name="Sun Y."/>
            <person name="Zhang Z."/>
            <person name="Bao J."/>
            <person name="Han Y."/>
            <person name="Dong L."/>
            <person name="Ji J."/>
            <person name="Chen P."/>
            <person name="Wu S."/>
            <person name="Liu J."/>
            <person name="Xiao Y."/>
            <person name="Bu D."/>
            <person name="Tan J."/>
            <person name="Yang L."/>
            <person name="Ye C."/>
            <person name="Zhang J."/>
            <person name="Xu J."/>
            <person name="Zhou Y."/>
            <person name="Yu Y."/>
            <person name="Zhang B."/>
            <person name="Zhuang S."/>
            <person name="Wei H."/>
            <person name="Liu B."/>
            <person name="Lei M."/>
            <person name="Yu H."/>
            <person name="Li Y."/>
            <person name="Xu H."/>
            <person name="Wei S."/>
            <person name="He X."/>
            <person name="Fang L."/>
            <person name="Zhang Z."/>
            <person name="Zhang Y."/>
            <person name="Huang X."/>
            <person name="Su Z."/>
            <person name="Tong W."/>
            <person name="Li J."/>
            <person name="Tong Z."/>
            <person name="Li S."/>
            <person name="Ye J."/>
            <person name="Wang L."/>
            <person name="Fang L."/>
            <person name="Lei T."/>
            <person name="Chen C.-S."/>
            <person name="Chen H.-C."/>
            <person name="Xu Z."/>
            <person name="Li H."/>
            <person name="Huang H."/>
            <person name="Zhang F."/>
            <person name="Xu H."/>
            <person name="Li N."/>
            <person name="Zhao C."/>
            <person name="Li S."/>
            <person name="Dong L."/>
            <person name="Huang Y."/>
            <person name="Li L."/>
            <person name="Xi Y."/>
            <person name="Qi Q."/>
            <person name="Li W."/>
            <person name="Zhang B."/>
            <person name="Hu W."/>
            <person name="Zhang Y."/>
            <person name="Tian X."/>
            <person name="Jiao Y."/>
            <person name="Liang X."/>
            <person name="Jin J."/>
            <person name="Gao L."/>
            <person name="Zheng W."/>
            <person name="Hao B."/>
            <person name="Liu S.-M."/>
            <person name="Wang W."/>
            <person name="Yuan L."/>
            <person name="Cao M."/>
            <person name="McDermott J."/>
            <person name="Samudrala R."/>
            <person name="Wang J."/>
            <person name="Wong G.K.-S."/>
            <person name="Yang H."/>
        </authorList>
    </citation>
    <scope>NUCLEOTIDE SEQUENCE [LARGE SCALE GENOMIC DNA]</scope>
    <source>
        <strain>cv. Nipponbare</strain>
    </source>
</reference>
<reference key="6">
    <citation type="journal article" date="2006" name="Plant Physiol.">
        <title>Genome-wide analysis of basic/helix-loop-helix transcription factor family in rice and Arabidopsis.</title>
        <authorList>
            <person name="Li X."/>
            <person name="Duan X."/>
            <person name="Jiang H."/>
            <person name="Sun Y."/>
            <person name="Tang Y."/>
            <person name="Yuan Z."/>
            <person name="Guo J."/>
            <person name="Liang W."/>
            <person name="Chen L."/>
            <person name="Yin J."/>
            <person name="Ma H."/>
            <person name="Wang J."/>
            <person name="Zhang D."/>
        </authorList>
    </citation>
    <scope>GENE FAMILY</scope>
    <scope>NOMENCLATURE</scope>
</reference>
<reference key="7">
    <citation type="journal article" date="2013" name="Mol. Plant">
        <title>A novel rice bHLH transcription factor, DTD, acts coordinately with TDR in controlling tapetum function and pollen development.</title>
        <authorList>
            <person name="Ji C."/>
            <person name="Li H."/>
            <person name="Chen L."/>
            <person name="Xie M."/>
            <person name="Wang F."/>
            <person name="Chen Y."/>
            <person name="Liu Y.G."/>
        </authorList>
    </citation>
    <scope>FUNCTION</scope>
    <scope>INTERACTION WITH TDR</scope>
    <scope>SUBCELLULAR LOCATION</scope>
    <scope>DEVELOPMENTAL STAGE</scope>
    <scope>DISRUPTION PHENOTYPE</scope>
</reference>
<reference key="8">
    <citation type="journal article" date="2013" name="Nat. Commun.">
        <title>EAT1 promotes tapetal cell death by regulating aspartic proteases during male reproductive development in rice.</title>
        <authorList>
            <person name="Niu N."/>
            <person name="Liang W."/>
            <person name="Yang X."/>
            <person name="Jin W."/>
            <person name="Wilson Z.A."/>
            <person name="Hu J."/>
            <person name="Zhang D."/>
        </authorList>
    </citation>
    <scope>FUNCTION</scope>
    <scope>INTERACTION WITH TDR</scope>
    <scope>SUBCELLULAR LOCATION</scope>
    <scope>DEVELOPMENTAL STAGE</scope>
    <scope>DISRUPTION PHENOTYPE</scope>
</reference>
<proteinExistence type="evidence at protein level"/>
<comment type="function">
    <text evidence="3 4">Transcription factor involved in the regulation of tapetum programmed cell death (PCD) and degradation during male reproductive development (PubMed:23385589, PubMed:23519457). Interacts with TDR and promote tapetal PCD by regulating the expression of RTS, and the two lipid-transfer proteins C4 and C6, which function in microspore development (PubMed:23519457). Acts downstream from and interacts with TDR in the regulation of tapetal PCD. Regulates directly the aspartic protease AP25 and AP37 during tapetal PCD (PubMed:23385589). May not target the cysteine protease CP1 (PubMed:23385589, PubMed:23519457).</text>
</comment>
<comment type="subunit">
    <text evidence="3 4">Interacts with TDR.</text>
</comment>
<comment type="subcellular location">
    <subcellularLocation>
        <location evidence="1 3 4">Nucleus</location>
    </subcellularLocation>
</comment>
<comment type="developmental stage">
    <text evidence="3 4">Expressed in developing anthers from stage 8 to stage 10 (PubMed:23519457). Expressed in developing anthers from stage 7 to stage 11 with a peak at stages 8 and 9. Highly expressed in the tapetum (PubMed:23385589).</text>
</comment>
<comment type="disruption phenotype">
    <text evidence="3 4">Male sterility due to failure of tapetum programmed cell death (PCD) and degeneration required for pollen maturation (PubMed:23519457). Male sterility due to delayed tapetal PCD and aborted pollen development (PubMed:23385589).</text>
</comment>
<comment type="similarity">
    <text>Belongs to the bHLH protein family.</text>
</comment>
<comment type="caution">
    <text evidence="1">Contains a degenerate basic motif not likely to bind DNA.</text>
</comment>
<comment type="sequence caution" evidence="8">
    <conflict type="erroneous gene model prediction">
        <sequence resource="EMBL-CDS" id="CAE03950"/>
    </conflict>
</comment>
<name>EAT1_ORYSJ</name>
<protein>
    <recommendedName>
        <fullName evidence="8">Transcription factor EAT1</fullName>
    </recommendedName>
    <alternativeName>
        <fullName evidence="8">Basic helix-loop-helix protein 141</fullName>
        <shortName evidence="5">OsbHLH141</shortName>
    </alternativeName>
    <alternativeName>
        <fullName evidence="7">Protein DELAYED TAPETUM DEGENERATION</fullName>
    </alternativeName>
    <alternativeName>
        <fullName evidence="6">Protein ETERNAL TAPETUM 1</fullName>
    </alternativeName>
</protein>
<accession>Q7X8R0</accession>
<accession>Q7FAG1</accession>
<feature type="chain" id="PRO_0000436456" description="Transcription factor EAT1">
    <location>
        <begin position="1"/>
        <end position="464"/>
    </location>
</feature>
<feature type="domain" description="bHLH" evidence="1">
    <location>
        <begin position="261"/>
        <end position="310"/>
    </location>
</feature>
<feature type="region of interest" description="Basic motif; degenerate" evidence="1">
    <location>
        <begin position="261"/>
        <end position="274"/>
    </location>
</feature>
<feature type="region of interest" description="Helix-loop-helix motif" evidence="1">
    <location>
        <begin position="275"/>
        <end position="310"/>
    </location>
</feature>
<feature type="region of interest" description="Disordered" evidence="2">
    <location>
        <begin position="338"/>
        <end position="357"/>
    </location>
</feature>